<gene>
    <name type="primary">CD19</name>
</gene>
<name>CD19_CALJA</name>
<evidence type="ECO:0000250" key="1">
    <source>
        <dbReference type="UniProtKB" id="P15391"/>
    </source>
</evidence>
<evidence type="ECO:0000250" key="2">
    <source>
        <dbReference type="UniProtKB" id="P25918"/>
    </source>
</evidence>
<evidence type="ECO:0000255" key="3"/>
<evidence type="ECO:0000256" key="4">
    <source>
        <dbReference type="SAM" id="MobiDB-lite"/>
    </source>
</evidence>
<reference key="1">
    <citation type="submission" date="2005-08" db="EMBL/GenBank/DDBJ databases">
        <title>Common marmoset CD19 protein.</title>
        <authorList>
            <person name="Yamabe E."/>
            <person name="Kohu K."/>
            <person name="Suemizu H."/>
            <person name="Sasaki E."/>
            <person name="Tanioka Y."/>
            <person name="Yagita H."/>
            <person name="Habu S."/>
            <person name="Satake M."/>
        </authorList>
    </citation>
    <scope>NUCLEOTIDE SEQUENCE [MRNA]</scope>
</reference>
<keyword id="KW-1064">Adaptive immunity</keyword>
<keyword id="KW-1003">Cell membrane</keyword>
<keyword id="KW-1015">Disulfide bond</keyword>
<keyword id="KW-0325">Glycoprotein</keyword>
<keyword id="KW-0391">Immunity</keyword>
<keyword id="KW-0393">Immunoglobulin domain</keyword>
<keyword id="KW-0472">Membrane</keyword>
<keyword id="KW-0597">Phosphoprotein</keyword>
<keyword id="KW-1185">Reference proteome</keyword>
<keyword id="KW-0677">Repeat</keyword>
<keyword id="KW-0732">Signal</keyword>
<keyword id="KW-0812">Transmembrane</keyword>
<keyword id="KW-1133">Transmembrane helix</keyword>
<protein>
    <recommendedName>
        <fullName>B-lymphocyte antigen CD19</fullName>
    </recommendedName>
    <alternativeName>
        <fullName>Differentiation antigen CD19</fullName>
    </alternativeName>
    <cdAntigenName>CD19</cdAntigenName>
</protein>
<proteinExistence type="evidence at transcript level"/>
<feature type="signal peptide" evidence="3">
    <location>
        <begin position="1"/>
        <end position="20"/>
    </location>
</feature>
<feature type="chain" id="PRO_0000244872" description="B-lymphocyte antigen CD19">
    <location>
        <begin position="21"/>
        <end position="558"/>
    </location>
</feature>
<feature type="topological domain" description="Extracellular" evidence="3">
    <location>
        <begin position="21"/>
        <end position="293"/>
    </location>
</feature>
<feature type="transmembrane region" description="Helical" evidence="3">
    <location>
        <begin position="294"/>
        <end position="314"/>
    </location>
</feature>
<feature type="topological domain" description="Cytoplasmic" evidence="3">
    <location>
        <begin position="315"/>
        <end position="558"/>
    </location>
</feature>
<feature type="domain" description="Ig-like C2-type 1">
    <location>
        <begin position="21"/>
        <end position="114"/>
    </location>
</feature>
<feature type="domain" description="Ig-like C2-type 2">
    <location>
        <begin position="177"/>
        <end position="279"/>
    </location>
</feature>
<feature type="region of interest" description="Disordered" evidence="4">
    <location>
        <begin position="331"/>
        <end position="357"/>
    </location>
</feature>
<feature type="region of interest" description="Disordered" evidence="4">
    <location>
        <begin position="374"/>
        <end position="500"/>
    </location>
</feature>
<feature type="region of interest" description="Disordered" evidence="4">
    <location>
        <begin position="513"/>
        <end position="558"/>
    </location>
</feature>
<feature type="compositionally biased region" description="Polar residues" evidence="4">
    <location>
        <begin position="345"/>
        <end position="357"/>
    </location>
</feature>
<feature type="compositionally biased region" description="Acidic residues" evidence="4">
    <location>
        <begin position="403"/>
        <end position="424"/>
    </location>
</feature>
<feature type="compositionally biased region" description="Polar residues" evidence="4">
    <location>
        <begin position="425"/>
        <end position="438"/>
    </location>
</feature>
<feature type="compositionally biased region" description="Acidic residues" evidence="4">
    <location>
        <begin position="443"/>
        <end position="456"/>
    </location>
</feature>
<feature type="compositionally biased region" description="Gly residues" evidence="4">
    <location>
        <begin position="546"/>
        <end position="558"/>
    </location>
</feature>
<feature type="modified residue" description="Phosphoserine" evidence="2">
    <location>
        <position position="229"/>
    </location>
</feature>
<feature type="modified residue" description="Phosphotyrosine" evidence="1">
    <location>
        <position position="350"/>
    </location>
</feature>
<feature type="modified residue" description="Phosphotyrosine" evidence="1">
    <location>
        <position position="380"/>
    </location>
</feature>
<feature type="modified residue" description="Phosphotyrosine" evidence="1">
    <location>
        <position position="411"/>
    </location>
</feature>
<feature type="modified residue" description="Phosphotyrosine" evidence="1">
    <location>
        <position position="441"/>
    </location>
</feature>
<feature type="modified residue" description="Phosphotyrosine" evidence="2">
    <location>
        <position position="502"/>
    </location>
</feature>
<feature type="modified residue" description="Phosphotyrosine" evidence="2">
    <location>
        <position position="533"/>
    </location>
</feature>
<feature type="glycosylation site" description="N-linked (GlcNAc...) asparagine" evidence="3">
    <location>
        <position position="126"/>
    </location>
</feature>
<feature type="glycosylation site" description="N-linked (GlcNAc...) asparagine" evidence="3">
    <location>
        <position position="139"/>
    </location>
</feature>
<feature type="glycosylation site" description="N-linked (GlcNAc...) asparagine" evidence="3">
    <location>
        <position position="182"/>
    </location>
</feature>
<feature type="disulfide bond" evidence="1">
    <location>
        <begin position="38"/>
        <end position="263"/>
    </location>
</feature>
<feature type="disulfide bond" evidence="1">
    <location>
        <begin position="98"/>
        <end position="201"/>
    </location>
</feature>
<feature type="disulfide bond" evidence="1">
    <location>
        <begin position="135"/>
        <end position="174"/>
    </location>
</feature>
<dbReference type="EMBL" id="DQ189219">
    <property type="protein sequence ID" value="ABA29630.1"/>
    <property type="molecule type" value="mRNA"/>
</dbReference>
<dbReference type="RefSeq" id="NP_001254698.1">
    <property type="nucleotide sequence ID" value="NM_001267769.1"/>
</dbReference>
<dbReference type="RefSeq" id="XP_035121966.1">
    <property type="nucleotide sequence ID" value="XM_035266075.2"/>
</dbReference>
<dbReference type="SMR" id="Q3LRP3"/>
<dbReference type="FunCoup" id="Q3LRP3">
    <property type="interactions" value="501"/>
</dbReference>
<dbReference type="STRING" id="9483.ENSCJAP00000070708"/>
<dbReference type="GlyCosmos" id="Q3LRP3">
    <property type="glycosylation" value="3 sites, No reported glycans"/>
</dbReference>
<dbReference type="GeneID" id="100402637"/>
<dbReference type="KEGG" id="cjc:100402637"/>
<dbReference type="CTD" id="930"/>
<dbReference type="eggNOG" id="ENOG502STG8">
    <property type="taxonomic scope" value="Eukaryota"/>
</dbReference>
<dbReference type="InParanoid" id="Q3LRP3"/>
<dbReference type="OrthoDB" id="9449216at2759"/>
<dbReference type="Proteomes" id="UP000008225">
    <property type="component" value="Unplaced"/>
</dbReference>
<dbReference type="GO" id="GO:0009897">
    <property type="term" value="C:external side of plasma membrane"/>
    <property type="evidence" value="ECO:0007669"/>
    <property type="project" value="TreeGrafter"/>
</dbReference>
<dbReference type="GO" id="GO:0045121">
    <property type="term" value="C:membrane raft"/>
    <property type="evidence" value="ECO:0007669"/>
    <property type="project" value="UniProtKB-SubCell"/>
</dbReference>
<dbReference type="GO" id="GO:0005886">
    <property type="term" value="C:plasma membrane"/>
    <property type="evidence" value="ECO:0000250"/>
    <property type="project" value="UniProtKB"/>
</dbReference>
<dbReference type="GO" id="GO:0050851">
    <property type="term" value="P:antigen receptor-mediated signaling pathway"/>
    <property type="evidence" value="ECO:0000250"/>
    <property type="project" value="UniProtKB"/>
</dbReference>
<dbReference type="GO" id="GO:0019724">
    <property type="term" value="P:B cell mediated immunity"/>
    <property type="evidence" value="ECO:0000250"/>
    <property type="project" value="UniProtKB"/>
</dbReference>
<dbReference type="GO" id="GO:0002322">
    <property type="term" value="P:B cell proliferation involved in immune response"/>
    <property type="evidence" value="ECO:0000250"/>
    <property type="project" value="UniProtKB"/>
</dbReference>
<dbReference type="GO" id="GO:0050853">
    <property type="term" value="P:B cell receptor signaling pathway"/>
    <property type="evidence" value="ECO:0000250"/>
    <property type="project" value="UniProtKB"/>
</dbReference>
<dbReference type="GO" id="GO:0001923">
    <property type="term" value="P:B-1 B cell differentiation"/>
    <property type="evidence" value="ECO:0000250"/>
    <property type="project" value="UniProtKB"/>
</dbReference>
<dbReference type="GO" id="GO:0016064">
    <property type="term" value="P:immunoglobulin mediated immune response"/>
    <property type="evidence" value="ECO:0000250"/>
    <property type="project" value="UniProtKB"/>
</dbReference>
<dbReference type="GO" id="GO:0051897">
    <property type="term" value="P:positive regulation of phosphatidylinositol 3-kinase/protein kinase B signal transduction"/>
    <property type="evidence" value="ECO:0000250"/>
    <property type="project" value="UniProtKB"/>
</dbReference>
<dbReference type="GO" id="GO:0051281">
    <property type="term" value="P:positive regulation of release of sequestered calcium ion into cytosol"/>
    <property type="evidence" value="ECO:0000250"/>
    <property type="project" value="UniProtKB"/>
</dbReference>
<dbReference type="GO" id="GO:0050864">
    <property type="term" value="P:regulation of B cell activation"/>
    <property type="evidence" value="ECO:0000250"/>
    <property type="project" value="UniProtKB"/>
</dbReference>
<dbReference type="GO" id="GO:0050855">
    <property type="term" value="P:regulation of B cell receptor signaling pathway"/>
    <property type="evidence" value="ECO:0000250"/>
    <property type="project" value="UniProtKB"/>
</dbReference>
<dbReference type="CDD" id="cd23999">
    <property type="entry name" value="CD19_protodomain_1_2"/>
    <property type="match status" value="1"/>
</dbReference>
<dbReference type="CDD" id="cd23998">
    <property type="entry name" value="CD19_protodomain_3_4"/>
    <property type="match status" value="1"/>
</dbReference>
<dbReference type="FunFam" id="2.60.40.10:FF:001701">
    <property type="entry name" value="CD19 molecule"/>
    <property type="match status" value="1"/>
</dbReference>
<dbReference type="Gene3D" id="2.60.40.10">
    <property type="entry name" value="Immunoglobulins"/>
    <property type="match status" value="1"/>
</dbReference>
<dbReference type="InterPro" id="IPR042341">
    <property type="entry name" value="CD19"/>
</dbReference>
<dbReference type="InterPro" id="IPR007110">
    <property type="entry name" value="Ig-like_dom"/>
</dbReference>
<dbReference type="InterPro" id="IPR036179">
    <property type="entry name" value="Ig-like_dom_sf"/>
</dbReference>
<dbReference type="InterPro" id="IPR013783">
    <property type="entry name" value="Ig-like_fold"/>
</dbReference>
<dbReference type="InterPro" id="IPR003599">
    <property type="entry name" value="Ig_sub"/>
</dbReference>
<dbReference type="PANTHER" id="PTHR16674">
    <property type="entry name" value="B-LYMPHOCYTE ANTIGEN CD19"/>
    <property type="match status" value="1"/>
</dbReference>
<dbReference type="PANTHER" id="PTHR16674:SF2">
    <property type="entry name" value="B-LYMPHOCYTE ANTIGEN CD19"/>
    <property type="match status" value="1"/>
</dbReference>
<dbReference type="SMART" id="SM00409">
    <property type="entry name" value="IG"/>
    <property type="match status" value="2"/>
</dbReference>
<dbReference type="SUPFAM" id="SSF48726">
    <property type="entry name" value="Immunoglobulin"/>
    <property type="match status" value="2"/>
</dbReference>
<dbReference type="PROSITE" id="PS50835">
    <property type="entry name" value="IG_LIKE"/>
    <property type="match status" value="2"/>
</dbReference>
<organism>
    <name type="scientific">Callithrix jacchus</name>
    <name type="common">White-tufted-ear marmoset</name>
    <dbReference type="NCBI Taxonomy" id="9483"/>
    <lineage>
        <taxon>Eukaryota</taxon>
        <taxon>Metazoa</taxon>
        <taxon>Chordata</taxon>
        <taxon>Craniata</taxon>
        <taxon>Vertebrata</taxon>
        <taxon>Euteleostomi</taxon>
        <taxon>Mammalia</taxon>
        <taxon>Eutheria</taxon>
        <taxon>Euarchontoglires</taxon>
        <taxon>Primates</taxon>
        <taxon>Haplorrhini</taxon>
        <taxon>Platyrrhini</taxon>
        <taxon>Cebidae</taxon>
        <taxon>Callitrichinae</taxon>
        <taxon>Callithrix</taxon>
        <taxon>Callithrix</taxon>
    </lineage>
</organism>
<sequence>MPPACLLFFLLFLTPMGVRPQEPRLVKVEEGDDAMLLCLEETSQDPAQQVAWWRESPSLEPFLKLNLGLPGLGFHVGPWGIWLFIFNVSHQMGGFYLCQPGPPSEKAWQPGWTVSVEGSGELFRWNASDLSGQGCGLENRSSEDPSSPSGNLMSSQLYVWAKDRPKIWEGEPPCGLLRDSLNQTLSQDLTMAPGSTLWLSCGVPPDSVSRGPLSWTHVRPKETNFSLLSLELKDNRPARDMWVMEKGLLLPQATAQDAGKYYCHRGNLTISWHLEITARSALWHWLVRTGGWKVLAVTLTYMIFCLGSLVGILHLQRALVLRRKRKRMTDPTRRFFKVTPPPGSGPQNQYGNVLSLPTPTSGLGRAQRWAAGLGGTAPSYRNPRSDVEADGTVGSRSPPGAGPEEEEGEGYEEPDSEEGSEFYENDSSLGQDQLSQDGSGYENPEDEPLGPEDEDSFSNAESYENEDEELTQPVSRTMDFLSPHGSAWDPSREATSLGSQSYEDMRGILYSAPQLRSIRGQPGPNHEEDADSYENMDNPDRPDPPWGGGGHVGTWGAR</sequence>
<accession>Q3LRP3</accession>
<comment type="function">
    <text evidence="1 2">Functions as a coreceptor for the B-cell antigen receptor complex (BCR) on B-lymphocytes. Decreases the threshold for activation of downstream signaling pathways and for triggering B-cell responses to antigens (By similarity). Activates signaling pathways that lead to the activation of phosphatidylinositol 3-kinase and the mobilization of intracellular Ca(2+) stores. Is not required for early steps during B cell differentiation in the blood marrow. Required for normal differentiation of B-1 cells. Required for normal B cell differentiation and proliferation in response to antigen challenges. Required for normal levels of serum immunoglobulins, and for production of high-affinity antibodies in response to antigen challenge (By similarity).</text>
</comment>
<comment type="subunit">
    <text evidence="1">Interacts with CR2/CD21. Part of a complex composed of CD19, CR2/CD21, CD81 and IFITM1/CD225 in the membrane of mature B-cells. Interacts directly with CD81 (via the second extracellular domain); this interaction is initiated early during biosynthesis in the ER/pre-Golgi compartments and is essential for trafficking and compartmentalization of CD19 receptor on the cell surface of activated B cells. Interacts with VAV. Interacts with GRB2 and SOS when phosphorylated on Tyr-350 and/or Tyr-380. Interacts with PLCG2 when phosphorylated on Tyr-411. Interacts with LYN. Interacts (when tyrosine phosphorylated) with the regulatory p85 subunit of phosphatidylinositol 3-kinase (PIK3R1 or PIK3R2). Interacts with GRB2.</text>
</comment>
<comment type="subcellular location">
    <subcellularLocation>
        <location evidence="2">Cell membrane</location>
        <topology evidence="2">Single-pass type I membrane protein</topology>
    </subcellularLocation>
    <subcellularLocation>
        <location evidence="2">Membrane raft</location>
        <topology evidence="2">Single-pass type I membrane protein</topology>
    </subcellularLocation>
</comment>
<comment type="PTM">
    <text evidence="1 2">Phosphorylated on tyrosine following B-cell activation (By similarity). Phosphorylated on tyrosine residues by LYN (By similarity). Tyrosine residues are phosphorylated sequentially after activation of the B cell receptor. Phosphorylation of Tyr-533 is extremely rapid (By similarity).</text>
</comment>